<gene>
    <name evidence="1" type="primary">rlmM</name>
    <name type="ordered locus">HCH_02278</name>
</gene>
<accession>Q2SJS1</accession>
<name>RLMM_HAHCH</name>
<evidence type="ECO:0000255" key="1">
    <source>
        <dbReference type="HAMAP-Rule" id="MF_01551"/>
    </source>
</evidence>
<evidence type="ECO:0000256" key="2">
    <source>
        <dbReference type="SAM" id="MobiDB-lite"/>
    </source>
</evidence>
<sequence length="389" mass="43555">MIGNARMSQKYPTSSSRKRSPLSSGKYSAIGLLAYCRPGFEAECAQELQNIASLQFVYGYSKIDKGTGVVFWRCSQGNPLDVYKEIEVSRCIFARQVFCALHDIEIEDTTDRVSPVVEALRPGGAFGFLHIETPLEDEAGSLQKLAKKLTAPMSAALRNAGVLSKAKTDELPQLHLVCLSGQHIIAALAVHPNSSALPLGIPRLRFRNEAPSRSALKIEEAFLTMLTPAEREFVLKRGQRGVDLGAAPGGWTWYMVTQGVKMTAVDHGALQQELLEDPAVTYVSDDGYVYKPQRKVDWVVCDIVDKPKRTMERMADWLCYDWTTYALFNLKLPMKTRMDEVEACLQRLQERLLGADIESEVRVKQLYHDREEVTVLALTGHFLTAFQKH</sequence>
<organism>
    <name type="scientific">Hahella chejuensis (strain KCTC 2396)</name>
    <dbReference type="NCBI Taxonomy" id="349521"/>
    <lineage>
        <taxon>Bacteria</taxon>
        <taxon>Pseudomonadati</taxon>
        <taxon>Pseudomonadota</taxon>
        <taxon>Gammaproteobacteria</taxon>
        <taxon>Oceanospirillales</taxon>
        <taxon>Hahellaceae</taxon>
        <taxon>Hahella</taxon>
    </lineage>
</organism>
<protein>
    <recommendedName>
        <fullName evidence="1">Ribosomal RNA large subunit methyltransferase M</fullName>
        <ecNumber evidence="1">2.1.1.186</ecNumber>
    </recommendedName>
    <alternativeName>
        <fullName evidence="1">23S rRNA (cytidine2498-2'-O)-methyltransferase</fullName>
    </alternativeName>
    <alternativeName>
        <fullName evidence="1">23S rRNA 2'-O-ribose methyltransferase RlmM</fullName>
    </alternativeName>
</protein>
<comment type="function">
    <text evidence="1">Catalyzes the 2'-O-methylation at nucleotide C2498 in 23S rRNA.</text>
</comment>
<comment type="catalytic activity">
    <reaction evidence="1">
        <text>cytidine(2498) in 23S rRNA + S-adenosyl-L-methionine = 2'-O-methylcytidine(2498) in 23S rRNA + S-adenosyl-L-homocysteine + H(+)</text>
        <dbReference type="Rhea" id="RHEA:42788"/>
        <dbReference type="Rhea" id="RHEA-COMP:10244"/>
        <dbReference type="Rhea" id="RHEA-COMP:10245"/>
        <dbReference type="ChEBI" id="CHEBI:15378"/>
        <dbReference type="ChEBI" id="CHEBI:57856"/>
        <dbReference type="ChEBI" id="CHEBI:59789"/>
        <dbReference type="ChEBI" id="CHEBI:74495"/>
        <dbReference type="ChEBI" id="CHEBI:82748"/>
        <dbReference type="EC" id="2.1.1.186"/>
    </reaction>
</comment>
<comment type="subunit">
    <text evidence="1">Monomer.</text>
</comment>
<comment type="subcellular location">
    <subcellularLocation>
        <location evidence="1">Cytoplasm</location>
    </subcellularLocation>
</comment>
<comment type="similarity">
    <text evidence="1">Belongs to the class I-like SAM-binding methyltransferase superfamily. RNA methyltransferase RlmE family. RlmM subfamily.</text>
</comment>
<reference key="1">
    <citation type="journal article" date="2005" name="Nucleic Acids Res.">
        <title>Genomic blueprint of Hahella chejuensis, a marine microbe producing an algicidal agent.</title>
        <authorList>
            <person name="Jeong H."/>
            <person name="Yim J.H."/>
            <person name="Lee C."/>
            <person name="Choi S.-H."/>
            <person name="Park Y.K."/>
            <person name="Yoon S.H."/>
            <person name="Hur C.-G."/>
            <person name="Kang H.-Y."/>
            <person name="Kim D."/>
            <person name="Lee H.H."/>
            <person name="Park K.H."/>
            <person name="Park S.-H."/>
            <person name="Park H.-S."/>
            <person name="Lee H.K."/>
            <person name="Oh T.K."/>
            <person name="Kim J.F."/>
        </authorList>
    </citation>
    <scope>NUCLEOTIDE SEQUENCE [LARGE SCALE GENOMIC DNA]</scope>
    <source>
        <strain>KCTC 2396</strain>
    </source>
</reference>
<dbReference type="EC" id="2.1.1.186" evidence="1"/>
<dbReference type="EMBL" id="CP000155">
    <property type="protein sequence ID" value="ABC29103.1"/>
    <property type="molecule type" value="Genomic_DNA"/>
</dbReference>
<dbReference type="SMR" id="Q2SJS1"/>
<dbReference type="STRING" id="349521.HCH_02278"/>
<dbReference type="KEGG" id="hch:HCH_02278"/>
<dbReference type="eggNOG" id="COG2933">
    <property type="taxonomic scope" value="Bacteria"/>
</dbReference>
<dbReference type="HOGENOM" id="CLU_043780_0_0_6"/>
<dbReference type="OrthoDB" id="154490at2"/>
<dbReference type="Proteomes" id="UP000000238">
    <property type="component" value="Chromosome"/>
</dbReference>
<dbReference type="GO" id="GO:0005737">
    <property type="term" value="C:cytoplasm"/>
    <property type="evidence" value="ECO:0007669"/>
    <property type="project" value="UniProtKB-SubCell"/>
</dbReference>
<dbReference type="GO" id="GO:0008757">
    <property type="term" value="F:S-adenosylmethionine-dependent methyltransferase activity"/>
    <property type="evidence" value="ECO:0007669"/>
    <property type="project" value="UniProtKB-UniRule"/>
</dbReference>
<dbReference type="GO" id="GO:0032259">
    <property type="term" value="P:methylation"/>
    <property type="evidence" value="ECO:0007669"/>
    <property type="project" value="UniProtKB-KW"/>
</dbReference>
<dbReference type="GO" id="GO:0006364">
    <property type="term" value="P:rRNA processing"/>
    <property type="evidence" value="ECO:0007669"/>
    <property type="project" value="UniProtKB-UniRule"/>
</dbReference>
<dbReference type="Gene3D" id="3.30.2300.20">
    <property type="match status" value="1"/>
</dbReference>
<dbReference type="Gene3D" id="3.30.70.2810">
    <property type="match status" value="1"/>
</dbReference>
<dbReference type="Gene3D" id="3.40.50.150">
    <property type="entry name" value="Vaccinia Virus protein VP39"/>
    <property type="match status" value="1"/>
</dbReference>
<dbReference type="HAMAP" id="MF_01551">
    <property type="entry name" value="23SrRNA_methyltr_M"/>
    <property type="match status" value="1"/>
</dbReference>
<dbReference type="InterPro" id="IPR040739">
    <property type="entry name" value="RlmM_FDX"/>
</dbReference>
<dbReference type="InterPro" id="IPR048646">
    <property type="entry name" value="RlmM_THUMP-like"/>
</dbReference>
<dbReference type="InterPro" id="IPR002877">
    <property type="entry name" value="RNA_MeTrfase_FtsJ_dom"/>
</dbReference>
<dbReference type="InterPro" id="IPR011224">
    <property type="entry name" value="rRNA_MeTrfase_M"/>
</dbReference>
<dbReference type="InterPro" id="IPR029063">
    <property type="entry name" value="SAM-dependent_MTases_sf"/>
</dbReference>
<dbReference type="NCBIfam" id="NF008734">
    <property type="entry name" value="PRK11760.1"/>
    <property type="match status" value="1"/>
</dbReference>
<dbReference type="PANTHER" id="PTHR37524">
    <property type="entry name" value="RIBOSOMAL RNA LARGE SUBUNIT METHYLTRANSFERASE M"/>
    <property type="match status" value="1"/>
</dbReference>
<dbReference type="PANTHER" id="PTHR37524:SF2">
    <property type="entry name" value="RIBOSOMAL RNA METHYLTRANSFERASE FTSJ DOMAIN-CONTAINING PROTEIN"/>
    <property type="match status" value="1"/>
</dbReference>
<dbReference type="Pfam" id="PF01728">
    <property type="entry name" value="FtsJ"/>
    <property type="match status" value="1"/>
</dbReference>
<dbReference type="Pfam" id="PF18125">
    <property type="entry name" value="RlmM_FDX"/>
    <property type="match status" value="1"/>
</dbReference>
<dbReference type="Pfam" id="PF21239">
    <property type="entry name" value="RLMM_N"/>
    <property type="match status" value="1"/>
</dbReference>
<dbReference type="PIRSF" id="PIRSF028774">
    <property type="entry name" value="UCP028774"/>
    <property type="match status" value="1"/>
</dbReference>
<dbReference type="SUPFAM" id="SSF53335">
    <property type="entry name" value="S-adenosyl-L-methionine-dependent methyltransferases"/>
    <property type="match status" value="1"/>
</dbReference>
<feature type="chain" id="PRO_0000314519" description="Ribosomal RNA large subunit methyltransferase M">
    <location>
        <begin position="1"/>
        <end position="389"/>
    </location>
</feature>
<feature type="region of interest" description="Disordered" evidence="2">
    <location>
        <begin position="1"/>
        <end position="24"/>
    </location>
</feature>
<feature type="compositionally biased region" description="Polar residues" evidence="2">
    <location>
        <begin position="1"/>
        <end position="13"/>
    </location>
</feature>
<feature type="active site" description="Proton acceptor" evidence="1">
    <location>
        <position position="331"/>
    </location>
</feature>
<feature type="binding site" evidence="1">
    <location>
        <position position="214"/>
    </location>
    <ligand>
        <name>S-adenosyl-L-methionine</name>
        <dbReference type="ChEBI" id="CHEBI:59789"/>
    </ligand>
</feature>
<feature type="binding site" evidence="1">
    <location>
        <begin position="247"/>
        <end position="250"/>
    </location>
    <ligand>
        <name>S-adenosyl-L-methionine</name>
        <dbReference type="ChEBI" id="CHEBI:59789"/>
    </ligand>
</feature>
<feature type="binding site" evidence="1">
    <location>
        <position position="266"/>
    </location>
    <ligand>
        <name>S-adenosyl-L-methionine</name>
        <dbReference type="ChEBI" id="CHEBI:59789"/>
    </ligand>
</feature>
<feature type="binding site" evidence="1">
    <location>
        <position position="286"/>
    </location>
    <ligand>
        <name>S-adenosyl-L-methionine</name>
        <dbReference type="ChEBI" id="CHEBI:59789"/>
    </ligand>
</feature>
<feature type="binding site" evidence="1">
    <location>
        <position position="302"/>
    </location>
    <ligand>
        <name>S-adenosyl-L-methionine</name>
        <dbReference type="ChEBI" id="CHEBI:59789"/>
    </ligand>
</feature>
<keyword id="KW-0963">Cytoplasm</keyword>
<keyword id="KW-0489">Methyltransferase</keyword>
<keyword id="KW-1185">Reference proteome</keyword>
<keyword id="KW-0698">rRNA processing</keyword>
<keyword id="KW-0949">S-adenosyl-L-methionine</keyword>
<keyword id="KW-0808">Transferase</keyword>
<proteinExistence type="inferred from homology"/>